<accession>B4SSA3</accession>
<protein>
    <recommendedName>
        <fullName evidence="1">Shikimate kinase</fullName>
        <shortName evidence="1">SK</shortName>
        <ecNumber evidence="1">2.7.1.71</ecNumber>
    </recommendedName>
</protein>
<dbReference type="EC" id="2.7.1.71" evidence="1"/>
<dbReference type="EMBL" id="CP001111">
    <property type="protein sequence ID" value="ACF52735.1"/>
    <property type="molecule type" value="Genomic_DNA"/>
</dbReference>
<dbReference type="RefSeq" id="WP_006384262.1">
    <property type="nucleotide sequence ID" value="NC_011071.1"/>
</dbReference>
<dbReference type="SMR" id="B4SSA3"/>
<dbReference type="STRING" id="391008.Smal_3036"/>
<dbReference type="KEGG" id="smt:Smal_3036"/>
<dbReference type="eggNOG" id="COG0703">
    <property type="taxonomic scope" value="Bacteria"/>
</dbReference>
<dbReference type="HOGENOM" id="CLU_057607_3_2_6"/>
<dbReference type="OrthoDB" id="9800332at2"/>
<dbReference type="UniPathway" id="UPA00053">
    <property type="reaction ID" value="UER00088"/>
</dbReference>
<dbReference type="Proteomes" id="UP000001867">
    <property type="component" value="Chromosome"/>
</dbReference>
<dbReference type="GO" id="GO:0005829">
    <property type="term" value="C:cytosol"/>
    <property type="evidence" value="ECO:0007669"/>
    <property type="project" value="TreeGrafter"/>
</dbReference>
<dbReference type="GO" id="GO:0005524">
    <property type="term" value="F:ATP binding"/>
    <property type="evidence" value="ECO:0007669"/>
    <property type="project" value="UniProtKB-UniRule"/>
</dbReference>
<dbReference type="GO" id="GO:0000287">
    <property type="term" value="F:magnesium ion binding"/>
    <property type="evidence" value="ECO:0007669"/>
    <property type="project" value="UniProtKB-UniRule"/>
</dbReference>
<dbReference type="GO" id="GO:0004765">
    <property type="term" value="F:shikimate kinase activity"/>
    <property type="evidence" value="ECO:0007669"/>
    <property type="project" value="UniProtKB-UniRule"/>
</dbReference>
<dbReference type="GO" id="GO:0008652">
    <property type="term" value="P:amino acid biosynthetic process"/>
    <property type="evidence" value="ECO:0007669"/>
    <property type="project" value="UniProtKB-KW"/>
</dbReference>
<dbReference type="GO" id="GO:0009073">
    <property type="term" value="P:aromatic amino acid family biosynthetic process"/>
    <property type="evidence" value="ECO:0007669"/>
    <property type="project" value="UniProtKB-KW"/>
</dbReference>
<dbReference type="GO" id="GO:0009423">
    <property type="term" value="P:chorismate biosynthetic process"/>
    <property type="evidence" value="ECO:0007669"/>
    <property type="project" value="UniProtKB-UniRule"/>
</dbReference>
<dbReference type="CDD" id="cd00464">
    <property type="entry name" value="SK"/>
    <property type="match status" value="1"/>
</dbReference>
<dbReference type="Gene3D" id="3.40.50.300">
    <property type="entry name" value="P-loop containing nucleotide triphosphate hydrolases"/>
    <property type="match status" value="1"/>
</dbReference>
<dbReference type="HAMAP" id="MF_00109">
    <property type="entry name" value="Shikimate_kinase"/>
    <property type="match status" value="1"/>
</dbReference>
<dbReference type="InterPro" id="IPR027417">
    <property type="entry name" value="P-loop_NTPase"/>
</dbReference>
<dbReference type="InterPro" id="IPR031322">
    <property type="entry name" value="Shikimate/glucono_kinase"/>
</dbReference>
<dbReference type="InterPro" id="IPR000623">
    <property type="entry name" value="Shikimate_kinase/TSH1"/>
</dbReference>
<dbReference type="InterPro" id="IPR023000">
    <property type="entry name" value="Shikimate_kinase_CS"/>
</dbReference>
<dbReference type="PANTHER" id="PTHR21087">
    <property type="entry name" value="SHIKIMATE KINASE"/>
    <property type="match status" value="1"/>
</dbReference>
<dbReference type="PANTHER" id="PTHR21087:SF16">
    <property type="entry name" value="SHIKIMATE KINASE 1, CHLOROPLASTIC"/>
    <property type="match status" value="1"/>
</dbReference>
<dbReference type="Pfam" id="PF01202">
    <property type="entry name" value="SKI"/>
    <property type="match status" value="1"/>
</dbReference>
<dbReference type="PRINTS" id="PR01100">
    <property type="entry name" value="SHIKIMTKNASE"/>
</dbReference>
<dbReference type="SUPFAM" id="SSF52540">
    <property type="entry name" value="P-loop containing nucleoside triphosphate hydrolases"/>
    <property type="match status" value="1"/>
</dbReference>
<dbReference type="PROSITE" id="PS01128">
    <property type="entry name" value="SHIKIMATE_KINASE"/>
    <property type="match status" value="1"/>
</dbReference>
<comment type="function">
    <text evidence="1">Catalyzes the specific phosphorylation of the 3-hydroxyl group of shikimic acid using ATP as a cosubstrate.</text>
</comment>
<comment type="catalytic activity">
    <reaction evidence="1">
        <text>shikimate + ATP = 3-phosphoshikimate + ADP + H(+)</text>
        <dbReference type="Rhea" id="RHEA:13121"/>
        <dbReference type="ChEBI" id="CHEBI:15378"/>
        <dbReference type="ChEBI" id="CHEBI:30616"/>
        <dbReference type="ChEBI" id="CHEBI:36208"/>
        <dbReference type="ChEBI" id="CHEBI:145989"/>
        <dbReference type="ChEBI" id="CHEBI:456216"/>
        <dbReference type="EC" id="2.7.1.71"/>
    </reaction>
</comment>
<comment type="cofactor">
    <cofactor evidence="1">
        <name>Mg(2+)</name>
        <dbReference type="ChEBI" id="CHEBI:18420"/>
    </cofactor>
    <text evidence="1">Binds 1 Mg(2+) ion per subunit.</text>
</comment>
<comment type="pathway">
    <text evidence="1">Metabolic intermediate biosynthesis; chorismate biosynthesis; chorismate from D-erythrose 4-phosphate and phosphoenolpyruvate: step 5/7.</text>
</comment>
<comment type="subunit">
    <text evidence="1">Monomer.</text>
</comment>
<comment type="subcellular location">
    <subcellularLocation>
        <location evidence="1">Cytoplasm</location>
    </subcellularLocation>
</comment>
<comment type="similarity">
    <text evidence="1">Belongs to the shikimate kinase family.</text>
</comment>
<organism>
    <name type="scientific">Stenotrophomonas maltophilia (strain R551-3)</name>
    <dbReference type="NCBI Taxonomy" id="391008"/>
    <lineage>
        <taxon>Bacteria</taxon>
        <taxon>Pseudomonadati</taxon>
        <taxon>Pseudomonadota</taxon>
        <taxon>Gammaproteobacteria</taxon>
        <taxon>Lysobacterales</taxon>
        <taxon>Lysobacteraceae</taxon>
        <taxon>Stenotrophomonas</taxon>
        <taxon>Stenotrophomonas maltophilia group</taxon>
    </lineage>
</organism>
<sequence>MNPAPNLILIGPMGAGKTCIGRRLAERFTLDFVDVDQAIVDAAGASIPTIFEHSGETGFRSHEREALARVLEGRGQLVSTGGGAVLDPDNRALIARRGFVVYLRVSVAEQLERLARDKGRPLLQRPDREQVLHDLAAHRDPLYRELADLILDTDPYTAADATAQLVVKLATQWQRQDLTA</sequence>
<name>AROK_STRM5</name>
<gene>
    <name evidence="1" type="primary">aroK</name>
    <name type="ordered locus">Smal_3036</name>
</gene>
<keyword id="KW-0028">Amino-acid biosynthesis</keyword>
<keyword id="KW-0057">Aromatic amino acid biosynthesis</keyword>
<keyword id="KW-0067">ATP-binding</keyword>
<keyword id="KW-0963">Cytoplasm</keyword>
<keyword id="KW-0418">Kinase</keyword>
<keyword id="KW-0460">Magnesium</keyword>
<keyword id="KW-0479">Metal-binding</keyword>
<keyword id="KW-0547">Nucleotide-binding</keyword>
<keyword id="KW-0808">Transferase</keyword>
<proteinExistence type="inferred from homology"/>
<feature type="chain" id="PRO_1000094417" description="Shikimate kinase">
    <location>
        <begin position="1"/>
        <end position="180"/>
    </location>
</feature>
<feature type="binding site" evidence="1">
    <location>
        <begin position="14"/>
        <end position="19"/>
    </location>
    <ligand>
        <name>ATP</name>
        <dbReference type="ChEBI" id="CHEBI:30616"/>
    </ligand>
</feature>
<feature type="binding site" evidence="1">
    <location>
        <position position="18"/>
    </location>
    <ligand>
        <name>Mg(2+)</name>
        <dbReference type="ChEBI" id="CHEBI:18420"/>
    </ligand>
</feature>
<feature type="binding site" evidence="1">
    <location>
        <position position="36"/>
    </location>
    <ligand>
        <name>substrate</name>
    </ligand>
</feature>
<feature type="binding site" evidence="1">
    <location>
        <position position="60"/>
    </location>
    <ligand>
        <name>substrate</name>
    </ligand>
</feature>
<feature type="binding site" evidence="1">
    <location>
        <position position="82"/>
    </location>
    <ligand>
        <name>substrate</name>
    </ligand>
</feature>
<feature type="binding site" evidence="1">
    <location>
        <position position="120"/>
    </location>
    <ligand>
        <name>ATP</name>
        <dbReference type="ChEBI" id="CHEBI:30616"/>
    </ligand>
</feature>
<feature type="binding site" evidence="1">
    <location>
        <position position="139"/>
    </location>
    <ligand>
        <name>substrate</name>
    </ligand>
</feature>
<evidence type="ECO:0000255" key="1">
    <source>
        <dbReference type="HAMAP-Rule" id="MF_00109"/>
    </source>
</evidence>
<reference key="1">
    <citation type="submission" date="2008-06" db="EMBL/GenBank/DDBJ databases">
        <title>Complete sequence of Stenotrophomonas maltophilia R551-3.</title>
        <authorList>
            <consortium name="US DOE Joint Genome Institute"/>
            <person name="Lucas S."/>
            <person name="Copeland A."/>
            <person name="Lapidus A."/>
            <person name="Glavina del Rio T."/>
            <person name="Dalin E."/>
            <person name="Tice H."/>
            <person name="Pitluck S."/>
            <person name="Chain P."/>
            <person name="Malfatti S."/>
            <person name="Shin M."/>
            <person name="Vergez L."/>
            <person name="Lang D."/>
            <person name="Schmutz J."/>
            <person name="Larimer F."/>
            <person name="Land M."/>
            <person name="Hauser L."/>
            <person name="Kyrpides N."/>
            <person name="Mikhailova N."/>
            <person name="Taghavi S."/>
            <person name="Monchy S."/>
            <person name="Newman L."/>
            <person name="Vangronsveld J."/>
            <person name="van der Lelie D."/>
            <person name="Richardson P."/>
        </authorList>
    </citation>
    <scope>NUCLEOTIDE SEQUENCE [LARGE SCALE GENOMIC DNA]</scope>
    <source>
        <strain>R551-3</strain>
    </source>
</reference>